<sequence>MAPRKRPENQKTPEVVVRPKSKRNRSPRELEPEAKKLCVKGPGSSRRFDSGLWAGLASLRVPPLCSSIVRALHQHKLGTAAWPSLQQGLQQSFLNSLASYRIFQKAAPFDRRATSLAWHPTHPSTLAVGSKGGDILLWNFGIKDKPTFIKGIGAGGSITGMKFNPLNTNQFFTSSMEGTTRLQDFKGNTLRVFASSDTCNVWFCSLDVSVKSRVVVTGDNVGHVILLNMDGRELWNLRMHKKKVTHVALNPCCDWLLATASVDQTVKIWDLRQVRGKSSFLHSLPHRHPVNAAHFSPDGAQLLTTDQKSEIRVYSACQWDCPPSLIPHPHRHFQHLTPIKASWHPRYNLIVVGRYPDPNFKSCSPHELRTIDVFDGSSGKIMYQLYDPESSGIMSLNEFNPMGDTLASVMGYHILVWSPEDAGTQK</sequence>
<protein>
    <recommendedName>
        <fullName>DNA damage-binding protein 2</fullName>
    </recommendedName>
    <alternativeName>
        <fullName>Damage-specific DNA-binding protein 2</fullName>
    </alternativeName>
</protein>
<reference key="1">
    <citation type="submission" date="2006-08" db="EMBL/GenBank/DDBJ databases">
        <authorList>
            <consortium name="NIH - Mammalian Gene Collection (MGC) project"/>
        </authorList>
    </citation>
    <scope>NUCLEOTIDE SEQUENCE [LARGE SCALE MRNA]</scope>
    <source>
        <strain>Hereford</strain>
        <tissue>Basal ganglia</tissue>
    </source>
</reference>
<proteinExistence type="evidence at transcript level"/>
<keyword id="KW-0007">Acetylation</keyword>
<keyword id="KW-0158">Chromosome</keyword>
<keyword id="KW-0227">DNA damage</keyword>
<keyword id="KW-0234">DNA repair</keyword>
<keyword id="KW-0238">DNA-binding</keyword>
<keyword id="KW-0539">Nucleus</keyword>
<keyword id="KW-0597">Phosphoprotein</keyword>
<keyword id="KW-1185">Reference proteome</keyword>
<keyword id="KW-0677">Repeat</keyword>
<keyword id="KW-0832">Ubl conjugation</keyword>
<keyword id="KW-0833">Ubl conjugation pathway</keyword>
<keyword id="KW-0853">WD repeat</keyword>
<gene>
    <name type="primary">DDB2</name>
</gene>
<accession>Q0VBY8</accession>
<organism>
    <name type="scientific">Bos taurus</name>
    <name type="common">Bovine</name>
    <dbReference type="NCBI Taxonomy" id="9913"/>
    <lineage>
        <taxon>Eukaryota</taxon>
        <taxon>Metazoa</taxon>
        <taxon>Chordata</taxon>
        <taxon>Craniata</taxon>
        <taxon>Vertebrata</taxon>
        <taxon>Euteleostomi</taxon>
        <taxon>Mammalia</taxon>
        <taxon>Eutheria</taxon>
        <taxon>Laurasiatheria</taxon>
        <taxon>Artiodactyla</taxon>
        <taxon>Ruminantia</taxon>
        <taxon>Pecora</taxon>
        <taxon>Bovidae</taxon>
        <taxon>Bovinae</taxon>
        <taxon>Bos</taxon>
    </lineage>
</organism>
<name>DDB2_BOVIN</name>
<evidence type="ECO:0000250" key="1">
    <source>
        <dbReference type="UniProtKB" id="Q92466"/>
    </source>
</evidence>
<evidence type="ECO:0000250" key="2">
    <source>
        <dbReference type="UniProtKB" id="Q99J79"/>
    </source>
</evidence>
<evidence type="ECO:0000256" key="3">
    <source>
        <dbReference type="SAM" id="MobiDB-lite"/>
    </source>
</evidence>
<evidence type="ECO:0000305" key="4"/>
<dbReference type="EMBL" id="BC120440">
    <property type="protein sequence ID" value="AAI20441.1"/>
    <property type="molecule type" value="mRNA"/>
</dbReference>
<dbReference type="RefSeq" id="NP_001069256.1">
    <property type="nucleotide sequence ID" value="NM_001075788.1"/>
</dbReference>
<dbReference type="RefSeq" id="XP_015330376.1">
    <property type="nucleotide sequence ID" value="XM_015474890.1"/>
</dbReference>
<dbReference type="SMR" id="Q0VBY8"/>
<dbReference type="FunCoup" id="Q0VBY8">
    <property type="interactions" value="2158"/>
</dbReference>
<dbReference type="STRING" id="9913.ENSBTAP00000072203"/>
<dbReference type="PaxDb" id="9913-ENSBTAP00000027965"/>
<dbReference type="Ensembl" id="ENSBTAT00000086532.2">
    <property type="protein sequence ID" value="ENSBTAP00000072203.1"/>
    <property type="gene ID" value="ENSBTAG00000020999.5"/>
</dbReference>
<dbReference type="GeneID" id="519357"/>
<dbReference type="KEGG" id="bta:519357"/>
<dbReference type="CTD" id="1643"/>
<dbReference type="VEuPathDB" id="HostDB:ENSBTAG00000020999"/>
<dbReference type="VGNC" id="VGNC:27942">
    <property type="gene designation" value="DDB2"/>
</dbReference>
<dbReference type="eggNOG" id="KOG4328">
    <property type="taxonomic scope" value="Eukaryota"/>
</dbReference>
<dbReference type="GeneTree" id="ENSGT00510000047881"/>
<dbReference type="HOGENOM" id="CLU_036401_1_0_1"/>
<dbReference type="InParanoid" id="Q0VBY8"/>
<dbReference type="OMA" id="CGHEHHN"/>
<dbReference type="OrthoDB" id="9890280at2759"/>
<dbReference type="TreeFam" id="TF331587"/>
<dbReference type="Reactome" id="R-BTA-5689880">
    <property type="pathway name" value="Ub-specific processing proteases"/>
</dbReference>
<dbReference type="Reactome" id="R-BTA-5696394">
    <property type="pathway name" value="DNA Damage Recognition in GG-NER"/>
</dbReference>
<dbReference type="Reactome" id="R-BTA-5696395">
    <property type="pathway name" value="Formation of Incision Complex in GG-NER"/>
</dbReference>
<dbReference type="Reactome" id="R-BTA-5696400">
    <property type="pathway name" value="Dual Incision in GG-NER"/>
</dbReference>
<dbReference type="Reactome" id="R-BTA-8951664">
    <property type="pathway name" value="Neddylation"/>
</dbReference>
<dbReference type="UniPathway" id="UPA00143"/>
<dbReference type="Proteomes" id="UP000009136">
    <property type="component" value="Chromosome 15"/>
</dbReference>
<dbReference type="Bgee" id="ENSBTAG00000020999">
    <property type="expression patterns" value="Expressed in monocyte and 105 other cell types or tissues"/>
</dbReference>
<dbReference type="GO" id="GO:0030054">
    <property type="term" value="C:cell junction"/>
    <property type="evidence" value="ECO:0007669"/>
    <property type="project" value="Ensembl"/>
</dbReference>
<dbReference type="GO" id="GO:0031465">
    <property type="term" value="C:Cul4B-RING E3 ubiquitin ligase complex"/>
    <property type="evidence" value="ECO:0007669"/>
    <property type="project" value="Ensembl"/>
</dbReference>
<dbReference type="GO" id="GO:0005654">
    <property type="term" value="C:nucleoplasm"/>
    <property type="evidence" value="ECO:0007669"/>
    <property type="project" value="Ensembl"/>
</dbReference>
<dbReference type="GO" id="GO:0005634">
    <property type="term" value="C:nucleus"/>
    <property type="evidence" value="ECO:0000318"/>
    <property type="project" value="GO_Central"/>
</dbReference>
<dbReference type="GO" id="GO:0090734">
    <property type="term" value="C:site of DNA damage"/>
    <property type="evidence" value="ECO:0000250"/>
    <property type="project" value="UniProtKB"/>
</dbReference>
<dbReference type="GO" id="GO:0003684">
    <property type="term" value="F:damaged DNA binding"/>
    <property type="evidence" value="ECO:0007669"/>
    <property type="project" value="Ensembl"/>
</dbReference>
<dbReference type="GO" id="GO:0044877">
    <property type="term" value="F:protein-containing complex binding"/>
    <property type="evidence" value="ECO:0007669"/>
    <property type="project" value="Ensembl"/>
</dbReference>
<dbReference type="GO" id="GO:0004842">
    <property type="term" value="F:ubiquitin-protein transferase activity"/>
    <property type="evidence" value="ECO:0007669"/>
    <property type="project" value="Ensembl"/>
</dbReference>
<dbReference type="GO" id="GO:0006281">
    <property type="term" value="P:DNA repair"/>
    <property type="evidence" value="ECO:0000318"/>
    <property type="project" value="GO_Central"/>
</dbReference>
<dbReference type="GO" id="GO:0006289">
    <property type="term" value="P:nucleotide-excision repair"/>
    <property type="evidence" value="ECO:0000250"/>
    <property type="project" value="UniProtKB"/>
</dbReference>
<dbReference type="GO" id="GO:0051865">
    <property type="term" value="P:protein autoubiquitination"/>
    <property type="evidence" value="ECO:0007669"/>
    <property type="project" value="Ensembl"/>
</dbReference>
<dbReference type="GO" id="GO:0000209">
    <property type="term" value="P:protein polyubiquitination"/>
    <property type="evidence" value="ECO:0007669"/>
    <property type="project" value="Ensembl"/>
</dbReference>
<dbReference type="GO" id="GO:0006290">
    <property type="term" value="P:pyrimidine dimer repair"/>
    <property type="evidence" value="ECO:0007669"/>
    <property type="project" value="Ensembl"/>
</dbReference>
<dbReference type="GO" id="GO:0009411">
    <property type="term" value="P:response to UV"/>
    <property type="evidence" value="ECO:0000318"/>
    <property type="project" value="GO_Central"/>
</dbReference>
<dbReference type="GO" id="GO:0070914">
    <property type="term" value="P:UV-damage excision repair"/>
    <property type="evidence" value="ECO:0007669"/>
    <property type="project" value="Ensembl"/>
</dbReference>
<dbReference type="FunFam" id="2.130.10.10:FF:000161">
    <property type="entry name" value="DNA damage-binding protein 2"/>
    <property type="match status" value="1"/>
</dbReference>
<dbReference type="FunFam" id="4.10.640.30:FF:000001">
    <property type="entry name" value="DNA damage-binding protein 2 isoform X1"/>
    <property type="match status" value="1"/>
</dbReference>
<dbReference type="Gene3D" id="4.10.640.30">
    <property type="match status" value="1"/>
</dbReference>
<dbReference type="Gene3D" id="2.130.10.10">
    <property type="entry name" value="YVTN repeat-like/Quinoprotein amine dehydrogenase"/>
    <property type="match status" value="1"/>
</dbReference>
<dbReference type="InterPro" id="IPR033312">
    <property type="entry name" value="DDB2"/>
</dbReference>
<dbReference type="InterPro" id="IPR015943">
    <property type="entry name" value="WD40/YVTN_repeat-like_dom_sf"/>
</dbReference>
<dbReference type="InterPro" id="IPR019775">
    <property type="entry name" value="WD40_repeat_CS"/>
</dbReference>
<dbReference type="InterPro" id="IPR036322">
    <property type="entry name" value="WD40_repeat_dom_sf"/>
</dbReference>
<dbReference type="InterPro" id="IPR001680">
    <property type="entry name" value="WD40_rpt"/>
</dbReference>
<dbReference type="PANTHER" id="PTHR15169">
    <property type="entry name" value="DAMAGE-SPECIFIC DNA BINDING PROTEIN 2"/>
    <property type="match status" value="1"/>
</dbReference>
<dbReference type="PANTHER" id="PTHR15169:SF0">
    <property type="entry name" value="DNA DAMAGE-BINDING PROTEIN 2"/>
    <property type="match status" value="1"/>
</dbReference>
<dbReference type="Pfam" id="PF00400">
    <property type="entry name" value="WD40"/>
    <property type="match status" value="2"/>
</dbReference>
<dbReference type="SMART" id="SM00320">
    <property type="entry name" value="WD40"/>
    <property type="match status" value="4"/>
</dbReference>
<dbReference type="SUPFAM" id="SSF50978">
    <property type="entry name" value="WD40 repeat-like"/>
    <property type="match status" value="1"/>
</dbReference>
<dbReference type="PROSITE" id="PS00678">
    <property type="entry name" value="WD_REPEATS_1"/>
    <property type="match status" value="1"/>
</dbReference>
<dbReference type="PROSITE" id="PS50082">
    <property type="entry name" value="WD_REPEATS_2"/>
    <property type="match status" value="1"/>
</dbReference>
<dbReference type="PROSITE" id="PS50294">
    <property type="entry name" value="WD_REPEATS_REGION"/>
    <property type="match status" value="1"/>
</dbReference>
<feature type="chain" id="PRO_0000351088" description="DNA damage-binding protein 2">
    <location>
        <begin position="1"/>
        <end position="426"/>
    </location>
</feature>
<feature type="repeat" description="WD 1">
    <location>
        <begin position="115"/>
        <end position="150"/>
    </location>
</feature>
<feature type="repeat" description="WD 2">
    <location>
        <begin position="158"/>
        <end position="193"/>
    </location>
</feature>
<feature type="repeat" description="WD 3">
    <location>
        <begin position="202"/>
        <end position="237"/>
    </location>
</feature>
<feature type="repeat" description="WD 4">
    <location>
        <begin position="243"/>
        <end position="286"/>
    </location>
</feature>
<feature type="repeat" description="WD 5">
    <location>
        <begin position="289"/>
        <end position="328"/>
    </location>
</feature>
<feature type="repeat" description="WD 6">
    <location>
        <begin position="342"/>
        <end position="385"/>
    </location>
</feature>
<feature type="repeat" description="WD 7">
    <location>
        <begin position="395"/>
        <end position="419"/>
    </location>
</feature>
<feature type="region of interest" description="Disordered" evidence="3">
    <location>
        <begin position="1"/>
        <end position="33"/>
    </location>
</feature>
<feature type="region of interest" description="Required for interaction with DDB1" evidence="1">
    <location>
        <begin position="67"/>
        <end position="78"/>
    </location>
</feature>
<feature type="region of interest" description="Required for interaction with DDB1" evidence="1">
    <location>
        <begin position="86"/>
        <end position="97"/>
    </location>
</feature>
<feature type="region of interest" description="Photolesion recognition" evidence="1">
    <location>
        <begin position="333"/>
        <end position="335"/>
    </location>
</feature>
<feature type="short sequence motif" description="DWD box" evidence="1">
    <location>
        <begin position="255"/>
        <end position="273"/>
    </location>
</feature>
<feature type="compositionally biased region" description="Basic and acidic residues" evidence="3">
    <location>
        <begin position="1"/>
        <end position="11"/>
    </location>
</feature>
<feature type="modified residue" description="Phosphoserine" evidence="1">
    <location>
        <position position="26"/>
    </location>
</feature>
<feature type="modified residue" description="N6-acetyllysine" evidence="1">
    <location>
        <position position="35"/>
    </location>
</feature>
<feature type="modified residue" description="N6-acetyllysine" evidence="1">
    <location>
        <position position="76"/>
    </location>
</feature>
<comment type="function">
    <text evidence="1">Protein, which is both involved in DNA repair and protein ubiquitination, as part of the UV-DDB complex and DCX (DDB1-CUL4-X-box) complexes, respectively. Core component of the UV-DDB complex (UV-damaged DNA-binding protein complex), a complex that recognizes UV-induced DNA damage and recruit proteins of the nucleotide excision repair pathway (the NER pathway) to initiate DNA repair. The UV-DDB complex preferentially binds to cyclobutane pyrimidine dimers (CPD), 6-4 photoproducts (6-4 PP), apurinic sites and short mismatches. Also functions as the substrate recognition module for the DCX (DDB2-CUL4-X-box) E3 ubiquitin-protein ligase complex DDB2-CUL4-ROC1 (also known as CUL4-DDB-ROC1 and CUL4-DDB-RBX1). The DDB2-CUL4-ROC1 complex may ubiquitinate histone H2A, histone H3 and histone H4 at sites of UV-induced DNA damage. The ubiquitination of histones may facilitate their removal from the nucleosome and promote subsequent DNA repair. The DDB2-CUL4-ROC1 complex also ubiquitinates XPC, which may enhance DNA-binding by XPC and promote NER. The DDB2-CUL4-ROC1 complex also ubiquitinates KAT7/HBO1 in response to DNA damage, leading to its degradation: recognizes KAT7/HBO1 following phosphorylation by ATR.</text>
</comment>
<comment type="pathway">
    <text>Protein modification; protein ubiquitination.</text>
</comment>
<comment type="subunit">
    <text evidence="1">Component of the UV-DDB complex which includes DDB1 and DDB2. The UV-DDB complex interacts with monoubiquitinated histone H2A and binds to XPC via the DDB2 subunit. Component of the DCX (DDB1-CUL4-X-box) E3 ubiquitin-protein ligase complex DDB1-CUL4-ROC1 (also known as CUL4-DDB-ROC1 and CUL4-DDB-RBX1), which includes CUL4A or CUL4B, DDB1, DDB2 and RBX1. DDB2 may function as the substrate recognition module within this complex. The DDB1-CUL4-ROC1 complex may associate with the COP9 signalosome, and this inhibits the E3 ubiquitin-protein ligase activity of the complex. A large number of other DCX complexes may also exist in which an alternate substrate targeting subunit replaces DDB2. These targeting subunits are generally known as DCAF (DDB1- and CUL4-associated factor) or CDW (CUL4-DDB1-associated WD40-repeat) proteins (By similarity).</text>
</comment>
<comment type="subcellular location">
    <subcellularLocation>
        <location evidence="1">Nucleus</location>
    </subcellularLocation>
    <subcellularLocation>
        <location evidence="1">Chromosome</location>
    </subcellularLocation>
    <text evidence="1">Accumulates at sites of DNA damage following UV irradiation.</text>
</comment>
<comment type="domain">
    <text evidence="1">The DWD box is required for interaction with DDB1.</text>
</comment>
<comment type="domain">
    <text evidence="1">Interblade loops of the WD repeat region mediate most of the interaction with DNA. A hairpin between blades 5 and 6 inserts into DNA minor groove and mediates recognition of lesions and separation of the damaged and undamaged strands (By similarity).</text>
</comment>
<comment type="PTM">
    <text evidence="2">Phosphorylation by ABL1 negatively regulate UV-DDB activity.</text>
</comment>
<comment type="PTM">
    <text evidence="1">Ubiquitinated by CUL4A in response to UV irradiation. Ubiquitination appears to both impair DNA-binding and promotes ubiquitin-dependent proteolysis. Degradation of DDB2 at sites of DNA damage may be a prerequisite for their recognition by XPC and subsequent repair. CUL4A-mediated degradation appears to be promoted by ABL1.</text>
</comment>
<comment type="PTM">
    <text evidence="1 2">Ubiquitinated, leading to proteasomal degradation, and deubiquitinated by USP24 (By similarity). Deubiquitinated by USP44; leading to its stabilization on DNA lesions (By similarity).</text>
</comment>
<comment type="PTM">
    <text evidence="1">Acetylated. Deacetylation by SIRT6 in response to UV stress facilitates nucleotide excision repair pathway (the NER pathway) transduction.</text>
</comment>
<comment type="similarity">
    <text evidence="4">Belongs to the WD repeat DDB2/WDR76 family.</text>
</comment>